<comment type="function">
    <text evidence="1">Cytoskeletal linker which probably functions in axonemal and non-axonemal dynein regulation. May play a role in the spermatozoa motility (By similarity).</text>
</comment>
<comment type="subcellular location">
    <subcellularLocation>
        <location evidence="1">Cytoplasm</location>
        <location evidence="1">Cytoskeleton</location>
    </subcellularLocation>
    <subcellularLocation>
        <location evidence="1">Cytoplasm</location>
        <location evidence="1">Cytoskeleton</location>
        <location evidence="1">Flagellum basal body</location>
    </subcellularLocation>
</comment>
<comment type="similarity">
    <text evidence="4">Belongs to the DRC4 family.</text>
</comment>
<comment type="sequence caution" evidence="4">
    <conflict type="erroneous initiation">
        <sequence resource="EMBL-CDS" id="AAL79828"/>
    </conflict>
</comment>
<name>DRC4_DROME</name>
<reference key="1">
    <citation type="journal article" date="2002" name="J. Biol. Chem.">
        <title>Isolation and properties of Gas8, a growth arrest-specific gene regulated during male gametogenesis to produce a protein associated with the sperm motility apparatus.</title>
        <authorList>
            <person name="Yeh S.-D."/>
            <person name="Chen Y.-J."/>
            <person name="Chang A.C.Y."/>
            <person name="Ray R."/>
            <person name="She B.-R."/>
            <person name="Lee W.-S."/>
            <person name="Chiang H.-S."/>
            <person name="Cohen S.N."/>
            <person name="Lin-Chao S."/>
        </authorList>
    </citation>
    <scope>NUCLEOTIDE SEQUENCE [MRNA]</scope>
</reference>
<reference key="2">
    <citation type="journal article" date="2000" name="Science">
        <title>The genome sequence of Drosophila melanogaster.</title>
        <authorList>
            <person name="Adams M.D."/>
            <person name="Celniker S.E."/>
            <person name="Holt R.A."/>
            <person name="Evans C.A."/>
            <person name="Gocayne J.D."/>
            <person name="Amanatides P.G."/>
            <person name="Scherer S.E."/>
            <person name="Li P.W."/>
            <person name="Hoskins R.A."/>
            <person name="Galle R.F."/>
            <person name="George R.A."/>
            <person name="Lewis S.E."/>
            <person name="Richards S."/>
            <person name="Ashburner M."/>
            <person name="Henderson S.N."/>
            <person name="Sutton G.G."/>
            <person name="Wortman J.R."/>
            <person name="Yandell M.D."/>
            <person name="Zhang Q."/>
            <person name="Chen L.X."/>
            <person name="Brandon R.C."/>
            <person name="Rogers Y.-H.C."/>
            <person name="Blazej R.G."/>
            <person name="Champe M."/>
            <person name="Pfeiffer B.D."/>
            <person name="Wan K.H."/>
            <person name="Doyle C."/>
            <person name="Baxter E.G."/>
            <person name="Helt G."/>
            <person name="Nelson C.R."/>
            <person name="Miklos G.L.G."/>
            <person name="Abril J.F."/>
            <person name="Agbayani A."/>
            <person name="An H.-J."/>
            <person name="Andrews-Pfannkoch C."/>
            <person name="Baldwin D."/>
            <person name="Ballew R.M."/>
            <person name="Basu A."/>
            <person name="Baxendale J."/>
            <person name="Bayraktaroglu L."/>
            <person name="Beasley E.M."/>
            <person name="Beeson K.Y."/>
            <person name="Benos P.V."/>
            <person name="Berman B.P."/>
            <person name="Bhandari D."/>
            <person name="Bolshakov S."/>
            <person name="Borkova D."/>
            <person name="Botchan M.R."/>
            <person name="Bouck J."/>
            <person name="Brokstein P."/>
            <person name="Brottier P."/>
            <person name="Burtis K.C."/>
            <person name="Busam D.A."/>
            <person name="Butler H."/>
            <person name="Cadieu E."/>
            <person name="Center A."/>
            <person name="Chandra I."/>
            <person name="Cherry J.M."/>
            <person name="Cawley S."/>
            <person name="Dahlke C."/>
            <person name="Davenport L.B."/>
            <person name="Davies P."/>
            <person name="de Pablos B."/>
            <person name="Delcher A."/>
            <person name="Deng Z."/>
            <person name="Mays A.D."/>
            <person name="Dew I."/>
            <person name="Dietz S.M."/>
            <person name="Dodson K."/>
            <person name="Doup L.E."/>
            <person name="Downes M."/>
            <person name="Dugan-Rocha S."/>
            <person name="Dunkov B.C."/>
            <person name="Dunn P."/>
            <person name="Durbin K.J."/>
            <person name="Evangelista C.C."/>
            <person name="Ferraz C."/>
            <person name="Ferriera S."/>
            <person name="Fleischmann W."/>
            <person name="Fosler C."/>
            <person name="Gabrielian A.E."/>
            <person name="Garg N.S."/>
            <person name="Gelbart W.M."/>
            <person name="Glasser K."/>
            <person name="Glodek A."/>
            <person name="Gong F."/>
            <person name="Gorrell J.H."/>
            <person name="Gu Z."/>
            <person name="Guan P."/>
            <person name="Harris M."/>
            <person name="Harris N.L."/>
            <person name="Harvey D.A."/>
            <person name="Heiman T.J."/>
            <person name="Hernandez J.R."/>
            <person name="Houck J."/>
            <person name="Hostin D."/>
            <person name="Houston K.A."/>
            <person name="Howland T.J."/>
            <person name="Wei M.-H."/>
            <person name="Ibegwam C."/>
            <person name="Jalali M."/>
            <person name="Kalush F."/>
            <person name="Karpen G.H."/>
            <person name="Ke Z."/>
            <person name="Kennison J.A."/>
            <person name="Ketchum K.A."/>
            <person name="Kimmel B.E."/>
            <person name="Kodira C.D."/>
            <person name="Kraft C.L."/>
            <person name="Kravitz S."/>
            <person name="Kulp D."/>
            <person name="Lai Z."/>
            <person name="Lasko P."/>
            <person name="Lei Y."/>
            <person name="Levitsky A.A."/>
            <person name="Li J.H."/>
            <person name="Li Z."/>
            <person name="Liang Y."/>
            <person name="Lin X."/>
            <person name="Liu X."/>
            <person name="Mattei B."/>
            <person name="McIntosh T.C."/>
            <person name="McLeod M.P."/>
            <person name="McPherson D."/>
            <person name="Merkulov G."/>
            <person name="Milshina N.V."/>
            <person name="Mobarry C."/>
            <person name="Morris J."/>
            <person name="Moshrefi A."/>
            <person name="Mount S.M."/>
            <person name="Moy M."/>
            <person name="Murphy B."/>
            <person name="Murphy L."/>
            <person name="Muzny D.M."/>
            <person name="Nelson D.L."/>
            <person name="Nelson D.R."/>
            <person name="Nelson K.A."/>
            <person name="Nixon K."/>
            <person name="Nusskern D.R."/>
            <person name="Pacleb J.M."/>
            <person name="Palazzolo M."/>
            <person name="Pittman G.S."/>
            <person name="Pan S."/>
            <person name="Pollard J."/>
            <person name="Puri V."/>
            <person name="Reese M.G."/>
            <person name="Reinert K."/>
            <person name="Remington K."/>
            <person name="Saunders R.D.C."/>
            <person name="Scheeler F."/>
            <person name="Shen H."/>
            <person name="Shue B.C."/>
            <person name="Siden-Kiamos I."/>
            <person name="Simpson M."/>
            <person name="Skupski M.P."/>
            <person name="Smith T.J."/>
            <person name="Spier E."/>
            <person name="Spradling A.C."/>
            <person name="Stapleton M."/>
            <person name="Strong R."/>
            <person name="Sun E."/>
            <person name="Svirskas R."/>
            <person name="Tector C."/>
            <person name="Turner R."/>
            <person name="Venter E."/>
            <person name="Wang A.H."/>
            <person name="Wang X."/>
            <person name="Wang Z.-Y."/>
            <person name="Wassarman D.A."/>
            <person name="Weinstock G.M."/>
            <person name="Weissenbach J."/>
            <person name="Williams S.M."/>
            <person name="Woodage T."/>
            <person name="Worley K.C."/>
            <person name="Wu D."/>
            <person name="Yang S."/>
            <person name="Yao Q.A."/>
            <person name="Ye J."/>
            <person name="Yeh R.-F."/>
            <person name="Zaveri J.S."/>
            <person name="Zhan M."/>
            <person name="Zhang G."/>
            <person name="Zhao Q."/>
            <person name="Zheng L."/>
            <person name="Zheng X.H."/>
            <person name="Zhong F.N."/>
            <person name="Zhong W."/>
            <person name="Zhou X."/>
            <person name="Zhu S.C."/>
            <person name="Zhu X."/>
            <person name="Smith H.O."/>
            <person name="Gibbs R.A."/>
            <person name="Myers E.W."/>
            <person name="Rubin G.M."/>
            <person name="Venter J.C."/>
        </authorList>
    </citation>
    <scope>NUCLEOTIDE SEQUENCE [LARGE SCALE GENOMIC DNA]</scope>
    <source>
        <strain>Berkeley</strain>
    </source>
</reference>
<reference key="3">
    <citation type="journal article" date="2002" name="Genome Biol.">
        <title>Annotation of the Drosophila melanogaster euchromatic genome: a systematic review.</title>
        <authorList>
            <person name="Misra S."/>
            <person name="Crosby M.A."/>
            <person name="Mungall C.J."/>
            <person name="Matthews B.B."/>
            <person name="Campbell K.S."/>
            <person name="Hradecky P."/>
            <person name="Huang Y."/>
            <person name="Kaminker J.S."/>
            <person name="Millburn G.H."/>
            <person name="Prochnik S.E."/>
            <person name="Smith C.D."/>
            <person name="Tupy J.L."/>
            <person name="Whitfield E.J."/>
            <person name="Bayraktaroglu L."/>
            <person name="Berman B.P."/>
            <person name="Bettencourt B.R."/>
            <person name="Celniker S.E."/>
            <person name="de Grey A.D.N.J."/>
            <person name="Drysdale R.A."/>
            <person name="Harris N.L."/>
            <person name="Richter J."/>
            <person name="Russo S."/>
            <person name="Schroeder A.J."/>
            <person name="Shu S.Q."/>
            <person name="Stapleton M."/>
            <person name="Yamada C."/>
            <person name="Ashburner M."/>
            <person name="Gelbart W.M."/>
            <person name="Rubin G.M."/>
            <person name="Lewis S.E."/>
        </authorList>
    </citation>
    <scope>GENOME REANNOTATION</scope>
    <source>
        <strain>Berkeley</strain>
    </source>
</reference>
<reference key="4">
    <citation type="journal article" date="2002" name="Genome Biol.">
        <title>A Drosophila full-length cDNA resource.</title>
        <authorList>
            <person name="Stapleton M."/>
            <person name="Carlson J.W."/>
            <person name="Brokstein P."/>
            <person name="Yu C."/>
            <person name="Champe M."/>
            <person name="George R.A."/>
            <person name="Guarin H."/>
            <person name="Kronmiller B."/>
            <person name="Pacleb J.M."/>
            <person name="Park S."/>
            <person name="Wan K.H."/>
            <person name="Rubin G.M."/>
            <person name="Celniker S.E."/>
        </authorList>
    </citation>
    <scope>NUCLEOTIDE SEQUENCE [LARGE SCALE MRNA]</scope>
    <source>
        <strain>Berkeley</strain>
        <tissue>Testis</tissue>
    </source>
</reference>
<protein>
    <recommendedName>
        <fullName>Dynein regulatory complex subunit 4</fullName>
    </recommendedName>
    <alternativeName>
        <fullName evidence="3">Growth arrest-specific protein 8</fullName>
    </alternativeName>
</protein>
<sequence>MPPKGKKGKKGKKLPVLIDGVDTSAMTRDQLEAFALRLKAEMDREREERNYFQLERDKIRTFWEITRQQLDETRYELQQKDKEIEATQDLADIDTKHVMQQMKHLQFENHNRLGEVRAEAMTQLKLAQEHHVLQENELQRDKRQLRRMLRERMEMSEMQLRQMEAHFNEKLLEQRITFERERKDNEMLHEEKMIEQKAKLDLFYGTQMFEVEERKNQQIKDLQDHHDLAFNDMKNYYNDITLNNLALIGSMKEQLEHLRKQAERSDRIAADTAAENRRLKEPLEHANIQLNEYRRKLEFYERDKQQLSRLKTRNTRLEKKVKGLTWEAETLILRNDSLVAEREGLKERFNDVIVELQQKTGLKNVLLERKIAALMREDEKRSIVLHETIATCAPNFAEKLTSLDERVGNIIDEKNKIILDLRYEVTKARKAHDDLLETYECKLKQYGVPTDELGFKPIRNRDQQQLYVCGPAGIITENK</sequence>
<keyword id="KW-0966">Cell projection</keyword>
<keyword id="KW-0969">Cilium</keyword>
<keyword id="KW-0175">Coiled coil</keyword>
<keyword id="KW-0963">Cytoplasm</keyword>
<keyword id="KW-0206">Cytoskeleton</keyword>
<keyword id="KW-0282">Flagellum</keyword>
<keyword id="KW-0493">Microtubule</keyword>
<keyword id="KW-1185">Reference proteome</keyword>
<evidence type="ECO:0000250" key="1"/>
<evidence type="ECO:0000255" key="2"/>
<evidence type="ECO:0000303" key="3">
    <source>
    </source>
</evidence>
<evidence type="ECO:0000305" key="4"/>
<dbReference type="EMBL" id="AF468957">
    <property type="protein sequence ID" value="AAL79828.1"/>
    <property type="status" value="ALT_INIT"/>
    <property type="molecule type" value="mRNA"/>
</dbReference>
<dbReference type="EMBL" id="AE014298">
    <property type="protein sequence ID" value="AAF45877.3"/>
    <property type="molecule type" value="Genomic_DNA"/>
</dbReference>
<dbReference type="EMBL" id="AY118453">
    <property type="protein sequence ID" value="AAM49822.1"/>
    <property type="molecule type" value="mRNA"/>
</dbReference>
<dbReference type="RefSeq" id="NP_001284840.1">
    <property type="nucleotide sequence ID" value="NM_001297911.1"/>
</dbReference>
<dbReference type="RefSeq" id="NP_001284841.1">
    <property type="nucleotide sequence ID" value="NM_001297912.1"/>
</dbReference>
<dbReference type="RefSeq" id="NP_570065.2">
    <property type="nucleotide sequence ID" value="NM_130709.2"/>
</dbReference>
<dbReference type="SMR" id="Q8MT08"/>
<dbReference type="BioGRID" id="57846">
    <property type="interactions" value="5"/>
</dbReference>
<dbReference type="DIP" id="DIP-20314N"/>
<dbReference type="FunCoup" id="Q8MT08">
    <property type="interactions" value="87"/>
</dbReference>
<dbReference type="IntAct" id="Q8MT08">
    <property type="interactions" value="5"/>
</dbReference>
<dbReference type="STRING" id="7227.FBpp0311223"/>
<dbReference type="PaxDb" id="7227-FBpp0070564"/>
<dbReference type="DNASU" id="31321"/>
<dbReference type="EnsemblMetazoa" id="FBtr0070589">
    <property type="protein sequence ID" value="FBpp0070564"/>
    <property type="gene ID" value="FBgn0029667"/>
</dbReference>
<dbReference type="EnsemblMetazoa" id="FBtr0344969">
    <property type="protein sequence ID" value="FBpp0311223"/>
    <property type="gene ID" value="FBgn0029667"/>
</dbReference>
<dbReference type="GeneID" id="31321"/>
<dbReference type="KEGG" id="dme:Dmel_CG14271"/>
<dbReference type="AGR" id="FB:FBgn0029667"/>
<dbReference type="CTD" id="2622"/>
<dbReference type="FlyBase" id="FBgn0029667">
    <property type="gene designation" value="Gas8"/>
</dbReference>
<dbReference type="VEuPathDB" id="VectorBase:FBgn0029667"/>
<dbReference type="eggNOG" id="ENOG502QQDA">
    <property type="taxonomic scope" value="Eukaryota"/>
</dbReference>
<dbReference type="HOGENOM" id="CLU_045343_0_0_1"/>
<dbReference type="InParanoid" id="Q8MT08"/>
<dbReference type="OMA" id="MKHLQYE"/>
<dbReference type="OrthoDB" id="275583at2759"/>
<dbReference type="PhylomeDB" id="Q8MT08"/>
<dbReference type="BioGRID-ORCS" id="31321">
    <property type="hits" value="0 hits in 1 CRISPR screen"/>
</dbReference>
<dbReference type="GenomeRNAi" id="31321"/>
<dbReference type="PRO" id="PR:Q8MT08"/>
<dbReference type="Proteomes" id="UP000000803">
    <property type="component" value="Chromosome X"/>
</dbReference>
<dbReference type="Bgee" id="FBgn0029667">
    <property type="expression patterns" value="Expressed in mid-late elongation-stage spermatid (Drosophila) in testis and 27 other cell types or tissues"/>
</dbReference>
<dbReference type="ExpressionAtlas" id="Q8MT08">
    <property type="expression patterns" value="baseline and differential"/>
</dbReference>
<dbReference type="GO" id="GO:0005794">
    <property type="term" value="C:Golgi apparatus"/>
    <property type="evidence" value="ECO:0000318"/>
    <property type="project" value="GO_Central"/>
</dbReference>
<dbReference type="GO" id="GO:0005874">
    <property type="term" value="C:microtubule"/>
    <property type="evidence" value="ECO:0000318"/>
    <property type="project" value="GO_Central"/>
</dbReference>
<dbReference type="GO" id="GO:0031514">
    <property type="term" value="C:motile cilium"/>
    <property type="evidence" value="ECO:0007669"/>
    <property type="project" value="UniProtKB-KW"/>
</dbReference>
<dbReference type="GO" id="GO:0008017">
    <property type="term" value="F:microtubule binding"/>
    <property type="evidence" value="ECO:0007669"/>
    <property type="project" value="InterPro"/>
</dbReference>
<dbReference type="GO" id="GO:0031267">
    <property type="term" value="F:small GTPase binding"/>
    <property type="evidence" value="ECO:0007669"/>
    <property type="project" value="InterPro"/>
</dbReference>
<dbReference type="GO" id="GO:0030317">
    <property type="term" value="P:flagellated sperm motility"/>
    <property type="evidence" value="ECO:0000250"/>
    <property type="project" value="UniProtKB"/>
</dbReference>
<dbReference type="InterPro" id="IPR039308">
    <property type="entry name" value="GAS8"/>
</dbReference>
<dbReference type="InterPro" id="IPR025593">
    <property type="entry name" value="GAS8_dom"/>
</dbReference>
<dbReference type="PANTHER" id="PTHR31543">
    <property type="entry name" value="DYNEIN REGULATORY COMPLEX SUBUNIT 4"/>
    <property type="match status" value="1"/>
</dbReference>
<dbReference type="PANTHER" id="PTHR31543:SF0">
    <property type="entry name" value="DYNEIN REGULATORY COMPLEX SUBUNIT 4"/>
    <property type="match status" value="1"/>
</dbReference>
<dbReference type="Pfam" id="PF13851">
    <property type="entry name" value="GAS"/>
    <property type="match status" value="1"/>
</dbReference>
<gene>
    <name evidence="3" type="primary">Gas8</name>
    <name type="ORF">CG14271</name>
</gene>
<organism>
    <name type="scientific">Drosophila melanogaster</name>
    <name type="common">Fruit fly</name>
    <dbReference type="NCBI Taxonomy" id="7227"/>
    <lineage>
        <taxon>Eukaryota</taxon>
        <taxon>Metazoa</taxon>
        <taxon>Ecdysozoa</taxon>
        <taxon>Arthropoda</taxon>
        <taxon>Hexapoda</taxon>
        <taxon>Insecta</taxon>
        <taxon>Pterygota</taxon>
        <taxon>Neoptera</taxon>
        <taxon>Endopterygota</taxon>
        <taxon>Diptera</taxon>
        <taxon>Brachycera</taxon>
        <taxon>Muscomorpha</taxon>
        <taxon>Ephydroidea</taxon>
        <taxon>Drosophilidae</taxon>
        <taxon>Drosophila</taxon>
        <taxon>Sophophora</taxon>
    </lineage>
</organism>
<proteinExistence type="evidence at transcript level"/>
<accession>Q8MT08</accession>
<accession>Q8T9R5</accession>
<accession>Q9W4R6</accession>
<feature type="chain" id="PRO_0000220380" description="Dynein regulatory complex subunit 4">
    <location>
        <begin position="1"/>
        <end position="479"/>
    </location>
</feature>
<feature type="coiled-coil region" evidence="2">
    <location>
        <begin position="28"/>
        <end position="93"/>
    </location>
</feature>
<feature type="coiled-coil region" evidence="2">
    <location>
        <begin position="117"/>
        <end position="170"/>
    </location>
</feature>
<feature type="coiled-coil region" evidence="2">
    <location>
        <begin position="210"/>
        <end position="347"/>
    </location>
</feature>